<accession>B9KFG9</accession>
<dbReference type="EMBL" id="CP000932">
    <property type="protein sequence ID" value="ACM63804.1"/>
    <property type="molecule type" value="Genomic_DNA"/>
</dbReference>
<dbReference type="RefSeq" id="WP_012661187.1">
    <property type="nucleotide sequence ID" value="NC_012039.1"/>
</dbReference>
<dbReference type="SMR" id="B9KFG9"/>
<dbReference type="STRING" id="306263.Cla_0451"/>
<dbReference type="GeneID" id="93004540"/>
<dbReference type="KEGG" id="cla:CLA_0451"/>
<dbReference type="eggNOG" id="COG0048">
    <property type="taxonomic scope" value="Bacteria"/>
</dbReference>
<dbReference type="HOGENOM" id="CLU_104295_1_2_7"/>
<dbReference type="Proteomes" id="UP000007727">
    <property type="component" value="Chromosome"/>
</dbReference>
<dbReference type="GO" id="GO:0015935">
    <property type="term" value="C:small ribosomal subunit"/>
    <property type="evidence" value="ECO:0007669"/>
    <property type="project" value="InterPro"/>
</dbReference>
<dbReference type="GO" id="GO:0019843">
    <property type="term" value="F:rRNA binding"/>
    <property type="evidence" value="ECO:0007669"/>
    <property type="project" value="UniProtKB-UniRule"/>
</dbReference>
<dbReference type="GO" id="GO:0003735">
    <property type="term" value="F:structural constituent of ribosome"/>
    <property type="evidence" value="ECO:0007669"/>
    <property type="project" value="InterPro"/>
</dbReference>
<dbReference type="GO" id="GO:0000049">
    <property type="term" value="F:tRNA binding"/>
    <property type="evidence" value="ECO:0007669"/>
    <property type="project" value="UniProtKB-UniRule"/>
</dbReference>
<dbReference type="GO" id="GO:0006412">
    <property type="term" value="P:translation"/>
    <property type="evidence" value="ECO:0007669"/>
    <property type="project" value="UniProtKB-UniRule"/>
</dbReference>
<dbReference type="CDD" id="cd03368">
    <property type="entry name" value="Ribosomal_S12"/>
    <property type="match status" value="1"/>
</dbReference>
<dbReference type="FunFam" id="2.40.50.140:FF:000001">
    <property type="entry name" value="30S ribosomal protein S12"/>
    <property type="match status" value="1"/>
</dbReference>
<dbReference type="Gene3D" id="2.40.50.140">
    <property type="entry name" value="Nucleic acid-binding proteins"/>
    <property type="match status" value="1"/>
</dbReference>
<dbReference type="HAMAP" id="MF_00403_B">
    <property type="entry name" value="Ribosomal_uS12_B"/>
    <property type="match status" value="1"/>
</dbReference>
<dbReference type="InterPro" id="IPR012340">
    <property type="entry name" value="NA-bd_OB-fold"/>
</dbReference>
<dbReference type="InterPro" id="IPR006032">
    <property type="entry name" value="Ribosomal_uS12"/>
</dbReference>
<dbReference type="InterPro" id="IPR005679">
    <property type="entry name" value="Ribosomal_uS12_bac"/>
</dbReference>
<dbReference type="NCBIfam" id="TIGR00981">
    <property type="entry name" value="rpsL_bact"/>
    <property type="match status" value="1"/>
</dbReference>
<dbReference type="PANTHER" id="PTHR11652">
    <property type="entry name" value="30S RIBOSOMAL PROTEIN S12 FAMILY MEMBER"/>
    <property type="match status" value="1"/>
</dbReference>
<dbReference type="Pfam" id="PF00164">
    <property type="entry name" value="Ribosom_S12_S23"/>
    <property type="match status" value="1"/>
</dbReference>
<dbReference type="PIRSF" id="PIRSF002133">
    <property type="entry name" value="Ribosomal_S12/S23"/>
    <property type="match status" value="1"/>
</dbReference>
<dbReference type="PRINTS" id="PR01034">
    <property type="entry name" value="RIBOSOMALS12"/>
</dbReference>
<dbReference type="SUPFAM" id="SSF50249">
    <property type="entry name" value="Nucleic acid-binding proteins"/>
    <property type="match status" value="1"/>
</dbReference>
<dbReference type="PROSITE" id="PS00055">
    <property type="entry name" value="RIBOSOMAL_S12"/>
    <property type="match status" value="1"/>
</dbReference>
<comment type="function">
    <text evidence="2">With S4 and S5 plays an important role in translational accuracy.</text>
</comment>
<comment type="function">
    <text evidence="2">Interacts with and stabilizes bases of the 16S rRNA that are involved in tRNA selection in the A site and with the mRNA backbone. Located at the interface of the 30S and 50S subunits, it traverses the body of the 30S subunit contacting proteins on the other side and probably holding the rRNA structure together. The combined cluster of proteins S8, S12 and S17 appears to hold together the shoulder and platform of the 30S subunit.</text>
</comment>
<comment type="subunit">
    <text evidence="2">Part of the 30S ribosomal subunit. Contacts proteins S8 and S17. May interact with IF1 in the 30S initiation complex.</text>
</comment>
<comment type="similarity">
    <text evidence="2">Belongs to the universal ribosomal protein uS12 family.</text>
</comment>
<reference key="1">
    <citation type="journal article" date="2008" name="Foodborne Pathog. Dis.">
        <title>The complete genome sequence and analysis of the human pathogen Campylobacter lari.</title>
        <authorList>
            <person name="Miller W.G."/>
            <person name="Wang G."/>
            <person name="Binnewies T.T."/>
            <person name="Parker C.T."/>
        </authorList>
    </citation>
    <scope>NUCLEOTIDE SEQUENCE [LARGE SCALE GENOMIC DNA]</scope>
    <source>
        <strain>RM2100 / D67 / ATCC BAA-1060</strain>
    </source>
</reference>
<feature type="chain" id="PRO_1000134623" description="Small ribosomal subunit protein uS12">
    <location>
        <begin position="1"/>
        <end position="127"/>
    </location>
</feature>
<feature type="modified residue" description="3-methylthioaspartic acid" evidence="1">
    <location>
        <position position="89"/>
    </location>
</feature>
<keyword id="KW-0488">Methylation</keyword>
<keyword id="KW-1185">Reference proteome</keyword>
<keyword id="KW-0687">Ribonucleoprotein</keyword>
<keyword id="KW-0689">Ribosomal protein</keyword>
<keyword id="KW-0694">RNA-binding</keyword>
<keyword id="KW-0699">rRNA-binding</keyword>
<keyword id="KW-0820">tRNA-binding</keyword>
<evidence type="ECO:0000250" key="1"/>
<evidence type="ECO:0000255" key="2">
    <source>
        <dbReference type="HAMAP-Rule" id="MF_00403"/>
    </source>
</evidence>
<evidence type="ECO:0000305" key="3"/>
<organism>
    <name type="scientific">Campylobacter lari (strain RM2100 / D67 / ATCC BAA-1060)</name>
    <dbReference type="NCBI Taxonomy" id="306263"/>
    <lineage>
        <taxon>Bacteria</taxon>
        <taxon>Pseudomonadati</taxon>
        <taxon>Campylobacterota</taxon>
        <taxon>Epsilonproteobacteria</taxon>
        <taxon>Campylobacterales</taxon>
        <taxon>Campylobacteraceae</taxon>
        <taxon>Campylobacter</taxon>
    </lineage>
</organism>
<sequence length="127" mass="13988">MPTINQLVRKERKKVLEKSKSPALKNCPQRRGVCTRVYTTTPKKPNSALRKVAKVRLTSGFEVISYIGGEGHNLQEHSIVLVRGGRVKDLPGVKYHIVRGALDTAGVAKRTVSRSKYGAKRPKAAAK</sequence>
<gene>
    <name evidence="2" type="primary">rpsL</name>
    <name type="ordered locus">Cla_0451</name>
</gene>
<name>RS12_CAMLR</name>
<protein>
    <recommendedName>
        <fullName evidence="2">Small ribosomal subunit protein uS12</fullName>
    </recommendedName>
    <alternativeName>
        <fullName evidence="3">30S ribosomal protein S12</fullName>
    </alternativeName>
</protein>
<proteinExistence type="inferred from homology"/>